<organism>
    <name type="scientific">Bacillus subtilis (strain 168)</name>
    <dbReference type="NCBI Taxonomy" id="224308"/>
    <lineage>
        <taxon>Bacteria</taxon>
        <taxon>Bacillati</taxon>
        <taxon>Bacillota</taxon>
        <taxon>Bacilli</taxon>
        <taxon>Bacillales</taxon>
        <taxon>Bacillaceae</taxon>
        <taxon>Bacillus</taxon>
    </lineage>
</organism>
<name>GATC_BACSU</name>
<gene>
    <name type="primary">gatC</name>
    <name type="synonym">yedA</name>
    <name type="synonym">yerL</name>
    <name type="ordered locus">BSU06670</name>
</gene>
<accession>O06492</accession>
<keyword id="KW-0067">ATP-binding</keyword>
<keyword id="KW-0436">Ligase</keyword>
<keyword id="KW-0547">Nucleotide-binding</keyword>
<keyword id="KW-0648">Protein biosynthesis</keyword>
<keyword id="KW-1185">Reference proteome</keyword>
<dbReference type="EC" id="6.3.5.-"/>
<dbReference type="EMBL" id="AF008553">
    <property type="protein sequence ID" value="AAB83963.1"/>
    <property type="molecule type" value="Genomic_DNA"/>
</dbReference>
<dbReference type="EMBL" id="AF011545">
    <property type="protein sequence ID" value="AAB72183.1"/>
    <property type="status" value="ALT_INIT"/>
    <property type="molecule type" value="Genomic_DNA"/>
</dbReference>
<dbReference type="EMBL" id="U92466">
    <property type="protein sequence ID" value="AAB66514.1"/>
    <property type="molecule type" value="Genomic_DNA"/>
</dbReference>
<dbReference type="EMBL" id="AL009126">
    <property type="protein sequence ID" value="CAB12487.1"/>
    <property type="molecule type" value="Genomic_DNA"/>
</dbReference>
<dbReference type="PIR" id="T44451">
    <property type="entry name" value="T44451"/>
</dbReference>
<dbReference type="RefSeq" id="NP_388549.1">
    <property type="nucleotide sequence ID" value="NC_000964.3"/>
</dbReference>
<dbReference type="RefSeq" id="WP_003219442.1">
    <property type="nucleotide sequence ID" value="NZ_OZ025638.1"/>
</dbReference>
<dbReference type="SMR" id="O06492"/>
<dbReference type="FunCoup" id="O06492">
    <property type="interactions" value="612"/>
</dbReference>
<dbReference type="STRING" id="224308.BSU06670"/>
<dbReference type="jPOST" id="O06492"/>
<dbReference type="PaxDb" id="224308-BSU06670"/>
<dbReference type="EnsemblBacteria" id="CAB12487">
    <property type="protein sequence ID" value="CAB12487"/>
    <property type="gene ID" value="BSU_06670"/>
</dbReference>
<dbReference type="GeneID" id="86874883"/>
<dbReference type="GeneID" id="936063"/>
<dbReference type="KEGG" id="bsu:BSU06670"/>
<dbReference type="PATRIC" id="fig|224308.179.peg.725"/>
<dbReference type="eggNOG" id="COG0721">
    <property type="taxonomic scope" value="Bacteria"/>
</dbReference>
<dbReference type="InParanoid" id="O06492"/>
<dbReference type="OrthoDB" id="9813938at2"/>
<dbReference type="PhylomeDB" id="O06492"/>
<dbReference type="BioCyc" id="BSUB:BSU06670-MONOMER"/>
<dbReference type="BioCyc" id="MetaCyc:MONOMER-13957"/>
<dbReference type="PRO" id="PR:O06492"/>
<dbReference type="Proteomes" id="UP000001570">
    <property type="component" value="Chromosome"/>
</dbReference>
<dbReference type="GO" id="GO:0050566">
    <property type="term" value="F:asparaginyl-tRNA synthase (glutamine-hydrolyzing) activity"/>
    <property type="evidence" value="ECO:0007669"/>
    <property type="project" value="RHEA"/>
</dbReference>
<dbReference type="GO" id="GO:0005524">
    <property type="term" value="F:ATP binding"/>
    <property type="evidence" value="ECO:0007669"/>
    <property type="project" value="UniProtKB-KW"/>
</dbReference>
<dbReference type="GO" id="GO:0050567">
    <property type="term" value="F:glutaminyl-tRNA synthase (glutamine-hydrolyzing) activity"/>
    <property type="evidence" value="ECO:0007669"/>
    <property type="project" value="UniProtKB-UniRule"/>
</dbReference>
<dbReference type="GO" id="GO:0070681">
    <property type="term" value="P:glutaminyl-tRNAGln biosynthesis via transamidation"/>
    <property type="evidence" value="ECO:0000318"/>
    <property type="project" value="GO_Central"/>
</dbReference>
<dbReference type="GO" id="GO:0006450">
    <property type="term" value="P:regulation of translational fidelity"/>
    <property type="evidence" value="ECO:0007669"/>
    <property type="project" value="InterPro"/>
</dbReference>
<dbReference type="GO" id="GO:0006412">
    <property type="term" value="P:translation"/>
    <property type="evidence" value="ECO:0007669"/>
    <property type="project" value="UniProtKB-UniRule"/>
</dbReference>
<dbReference type="Gene3D" id="1.10.20.60">
    <property type="entry name" value="Glu-tRNAGln amidotransferase C subunit, N-terminal domain"/>
    <property type="match status" value="1"/>
</dbReference>
<dbReference type="HAMAP" id="MF_00122">
    <property type="entry name" value="GatC"/>
    <property type="match status" value="1"/>
</dbReference>
<dbReference type="InterPro" id="IPR036113">
    <property type="entry name" value="Asp/Glu-ADT_sf_sub_c"/>
</dbReference>
<dbReference type="InterPro" id="IPR003837">
    <property type="entry name" value="GatC"/>
</dbReference>
<dbReference type="NCBIfam" id="TIGR00135">
    <property type="entry name" value="gatC"/>
    <property type="match status" value="1"/>
</dbReference>
<dbReference type="PANTHER" id="PTHR15004">
    <property type="entry name" value="GLUTAMYL-TRNA(GLN) AMIDOTRANSFERASE SUBUNIT C, MITOCHONDRIAL"/>
    <property type="match status" value="1"/>
</dbReference>
<dbReference type="PANTHER" id="PTHR15004:SF0">
    <property type="entry name" value="GLUTAMYL-TRNA(GLN) AMIDOTRANSFERASE SUBUNIT C, MITOCHONDRIAL"/>
    <property type="match status" value="1"/>
</dbReference>
<dbReference type="Pfam" id="PF02686">
    <property type="entry name" value="GatC"/>
    <property type="match status" value="1"/>
</dbReference>
<dbReference type="SUPFAM" id="SSF141000">
    <property type="entry name" value="Glu-tRNAGln amidotransferase C subunit"/>
    <property type="match status" value="1"/>
</dbReference>
<protein>
    <recommendedName>
        <fullName>Glutamyl-tRNA(Gln) amidotransferase subunit C</fullName>
        <shortName>Glu-ADT subunit C</shortName>
        <ecNumber>6.3.5.-</ecNumber>
    </recommendedName>
</protein>
<comment type="function">
    <text evidence="1">Allows the formation of correctly charged Asn-tRNA(Asn) or Gln-tRNA(Gln) through the transamidation of misacylated Asp-tRNA(Asn) or Glu-tRNA(Gln) in organisms which lack either or both of asparaginyl-tRNA or glutaminyl-tRNA synthetases. The reaction takes place in the presence of glutamine and ATP through an activated phospho-Asp-tRNA(Asn) or phospho-Glu-tRNA(Gln) (By similarity).</text>
</comment>
<comment type="catalytic activity">
    <reaction>
        <text>L-glutamyl-tRNA(Gln) + L-glutamine + ATP + H2O = L-glutaminyl-tRNA(Gln) + L-glutamate + ADP + phosphate + H(+)</text>
        <dbReference type="Rhea" id="RHEA:17521"/>
        <dbReference type="Rhea" id="RHEA-COMP:9681"/>
        <dbReference type="Rhea" id="RHEA-COMP:9684"/>
        <dbReference type="ChEBI" id="CHEBI:15377"/>
        <dbReference type="ChEBI" id="CHEBI:15378"/>
        <dbReference type="ChEBI" id="CHEBI:29985"/>
        <dbReference type="ChEBI" id="CHEBI:30616"/>
        <dbReference type="ChEBI" id="CHEBI:43474"/>
        <dbReference type="ChEBI" id="CHEBI:58359"/>
        <dbReference type="ChEBI" id="CHEBI:78520"/>
        <dbReference type="ChEBI" id="CHEBI:78521"/>
        <dbReference type="ChEBI" id="CHEBI:456216"/>
    </reaction>
</comment>
<comment type="catalytic activity">
    <reaction>
        <text>L-aspartyl-tRNA(Asn) + L-glutamine + ATP + H2O = L-asparaginyl-tRNA(Asn) + L-glutamate + ADP + phosphate + 2 H(+)</text>
        <dbReference type="Rhea" id="RHEA:14513"/>
        <dbReference type="Rhea" id="RHEA-COMP:9674"/>
        <dbReference type="Rhea" id="RHEA-COMP:9677"/>
        <dbReference type="ChEBI" id="CHEBI:15377"/>
        <dbReference type="ChEBI" id="CHEBI:15378"/>
        <dbReference type="ChEBI" id="CHEBI:29985"/>
        <dbReference type="ChEBI" id="CHEBI:30616"/>
        <dbReference type="ChEBI" id="CHEBI:43474"/>
        <dbReference type="ChEBI" id="CHEBI:58359"/>
        <dbReference type="ChEBI" id="CHEBI:78515"/>
        <dbReference type="ChEBI" id="CHEBI:78516"/>
        <dbReference type="ChEBI" id="CHEBI:456216"/>
    </reaction>
</comment>
<comment type="subunit">
    <text evidence="1">Heterotrimer of A, B and C subunits.</text>
</comment>
<comment type="similarity">
    <text evidence="2">Belongs to the GatC family.</text>
</comment>
<comment type="sequence caution" evidence="2">
    <conflict type="erroneous initiation">
        <sequence resource="EMBL-CDS" id="AAB72183"/>
    </conflict>
</comment>
<feature type="chain" id="PRO_0000105276" description="Glutamyl-tRNA(Gln) amidotransferase subunit C">
    <location>
        <begin position="1"/>
        <end position="96"/>
    </location>
</feature>
<proteinExistence type="inferred from homology"/>
<reference key="1">
    <citation type="journal article" date="1997" name="Proc. Natl. Acad. Sci. U.S.A.">
        <title>Glu-tRNAGln amidotransferase: a novel heterotrimeric enzyme required for correct decoding of glutamine codons during translation.</title>
        <authorList>
            <person name="Curnow A.W."/>
            <person name="Hong K.-W."/>
            <person name="Yuan R."/>
            <person name="Kim S.-I."/>
            <person name="Martins O."/>
            <person name="Winkler W."/>
            <person name="Henkin T.M."/>
            <person name="Soell D."/>
        </authorList>
    </citation>
    <scope>NUCLEOTIDE SEQUENCE [GENOMIC DNA]</scope>
    <source>
        <strain>168</strain>
    </source>
</reference>
<reference key="2">
    <citation type="journal article" date="1996" name="Microbiology">
        <title>The 52 degrees-55 degrees segment of the Bacillus subtilis chromosome: a region devoted to purine uptake and metabolism, and containing the genes cotA, gabP and guaA and the pur gene cluster within a 34960 bp nucleotide sequence.</title>
        <authorList>
            <person name="Borriss R."/>
            <person name="Porwollik S."/>
            <person name="Schroeter R."/>
        </authorList>
    </citation>
    <scope>NUCLEOTIDE SEQUENCE [GENOMIC DNA]</scope>
    <source>
        <strain>168</strain>
    </source>
</reference>
<reference key="3">
    <citation type="journal article" date="1997" name="Mol. Microbiol.">
        <title>Osmostress response in Bacillus subtilis: characterization of a proline uptake system (OpuE) regulated by high osmolarity and the alternative transcription factor sigma B.</title>
        <authorList>
            <person name="von Blohn C."/>
            <person name="Kempf B."/>
            <person name="Kappes R.M."/>
            <person name="Bremer E."/>
        </authorList>
    </citation>
    <scope>NUCLEOTIDE SEQUENCE [GENOMIC DNA]</scope>
    <source>
        <strain>168 / JH642</strain>
    </source>
</reference>
<reference key="4">
    <citation type="journal article" date="1997" name="Nature">
        <title>The complete genome sequence of the Gram-positive bacterium Bacillus subtilis.</title>
        <authorList>
            <person name="Kunst F."/>
            <person name="Ogasawara N."/>
            <person name="Moszer I."/>
            <person name="Albertini A.M."/>
            <person name="Alloni G."/>
            <person name="Azevedo V."/>
            <person name="Bertero M.G."/>
            <person name="Bessieres P."/>
            <person name="Bolotin A."/>
            <person name="Borchert S."/>
            <person name="Borriss R."/>
            <person name="Boursier L."/>
            <person name="Brans A."/>
            <person name="Braun M."/>
            <person name="Brignell S.C."/>
            <person name="Bron S."/>
            <person name="Brouillet S."/>
            <person name="Bruschi C.V."/>
            <person name="Caldwell B."/>
            <person name="Capuano V."/>
            <person name="Carter N.M."/>
            <person name="Choi S.-K."/>
            <person name="Codani J.-J."/>
            <person name="Connerton I.F."/>
            <person name="Cummings N.J."/>
            <person name="Daniel R.A."/>
            <person name="Denizot F."/>
            <person name="Devine K.M."/>
            <person name="Duesterhoeft A."/>
            <person name="Ehrlich S.D."/>
            <person name="Emmerson P.T."/>
            <person name="Entian K.-D."/>
            <person name="Errington J."/>
            <person name="Fabret C."/>
            <person name="Ferrari E."/>
            <person name="Foulger D."/>
            <person name="Fritz C."/>
            <person name="Fujita M."/>
            <person name="Fujita Y."/>
            <person name="Fuma S."/>
            <person name="Galizzi A."/>
            <person name="Galleron N."/>
            <person name="Ghim S.-Y."/>
            <person name="Glaser P."/>
            <person name="Goffeau A."/>
            <person name="Golightly E.J."/>
            <person name="Grandi G."/>
            <person name="Guiseppi G."/>
            <person name="Guy B.J."/>
            <person name="Haga K."/>
            <person name="Haiech J."/>
            <person name="Harwood C.R."/>
            <person name="Henaut A."/>
            <person name="Hilbert H."/>
            <person name="Holsappel S."/>
            <person name="Hosono S."/>
            <person name="Hullo M.-F."/>
            <person name="Itaya M."/>
            <person name="Jones L.-M."/>
            <person name="Joris B."/>
            <person name="Karamata D."/>
            <person name="Kasahara Y."/>
            <person name="Klaerr-Blanchard M."/>
            <person name="Klein C."/>
            <person name="Kobayashi Y."/>
            <person name="Koetter P."/>
            <person name="Koningstein G."/>
            <person name="Krogh S."/>
            <person name="Kumano M."/>
            <person name="Kurita K."/>
            <person name="Lapidus A."/>
            <person name="Lardinois S."/>
            <person name="Lauber J."/>
            <person name="Lazarevic V."/>
            <person name="Lee S.-M."/>
            <person name="Levine A."/>
            <person name="Liu H."/>
            <person name="Masuda S."/>
            <person name="Mauel C."/>
            <person name="Medigue C."/>
            <person name="Medina N."/>
            <person name="Mellado R.P."/>
            <person name="Mizuno M."/>
            <person name="Moestl D."/>
            <person name="Nakai S."/>
            <person name="Noback M."/>
            <person name="Noone D."/>
            <person name="O'Reilly M."/>
            <person name="Ogawa K."/>
            <person name="Ogiwara A."/>
            <person name="Oudega B."/>
            <person name="Park S.-H."/>
            <person name="Parro V."/>
            <person name="Pohl T.M."/>
            <person name="Portetelle D."/>
            <person name="Porwollik S."/>
            <person name="Prescott A.M."/>
            <person name="Presecan E."/>
            <person name="Pujic P."/>
            <person name="Purnelle B."/>
            <person name="Rapoport G."/>
            <person name="Rey M."/>
            <person name="Reynolds S."/>
            <person name="Rieger M."/>
            <person name="Rivolta C."/>
            <person name="Rocha E."/>
            <person name="Roche B."/>
            <person name="Rose M."/>
            <person name="Sadaie Y."/>
            <person name="Sato T."/>
            <person name="Scanlan E."/>
            <person name="Schleich S."/>
            <person name="Schroeter R."/>
            <person name="Scoffone F."/>
            <person name="Sekiguchi J."/>
            <person name="Sekowska A."/>
            <person name="Seror S.J."/>
            <person name="Serror P."/>
            <person name="Shin B.-S."/>
            <person name="Soldo B."/>
            <person name="Sorokin A."/>
            <person name="Tacconi E."/>
            <person name="Takagi T."/>
            <person name="Takahashi H."/>
            <person name="Takemaru K."/>
            <person name="Takeuchi M."/>
            <person name="Tamakoshi A."/>
            <person name="Tanaka T."/>
            <person name="Terpstra P."/>
            <person name="Tognoni A."/>
            <person name="Tosato V."/>
            <person name="Uchiyama S."/>
            <person name="Vandenbol M."/>
            <person name="Vannier F."/>
            <person name="Vassarotti A."/>
            <person name="Viari A."/>
            <person name="Wambutt R."/>
            <person name="Wedler E."/>
            <person name="Wedler H."/>
            <person name="Weitzenegger T."/>
            <person name="Winters P."/>
            <person name="Wipat A."/>
            <person name="Yamamoto H."/>
            <person name="Yamane K."/>
            <person name="Yasumoto K."/>
            <person name="Yata K."/>
            <person name="Yoshida K."/>
            <person name="Yoshikawa H.-F."/>
            <person name="Zumstein E."/>
            <person name="Yoshikawa H."/>
            <person name="Danchin A."/>
        </authorList>
    </citation>
    <scope>NUCLEOTIDE SEQUENCE [LARGE SCALE GENOMIC DNA]</scope>
    <source>
        <strain>168</strain>
    </source>
</reference>
<evidence type="ECO:0000250" key="1"/>
<evidence type="ECO:0000305" key="2"/>
<sequence length="96" mass="10859">MSRISIEEVKHVAHLARLAITEEEAKMFTEQLDSIISFAEELNEVNTDNVEPTTHVLKMKNVMREDEAGKGLPVEDVMKNAPDHKDGYIRVPSILD</sequence>